<sequence length="430" mass="49513">MKTTIAEVNQYVGQEVTIGAWLANKRSSGKIAFLQLRDGTGFIQGVVEKANVSEEVFQRAKTLTQETSLYVTGTVRVDERSPFGYELSVTNIQVINEAVDYPITPKEHGVEFLMDHRHLWLRSRRQHAIMKIRNELIRATYEFFNERGFVKVDAPILTGSAPEGTTELFHTKYFDEDAYLSQSGQLYMEAAAMALGKVFSFGPTFRAEKSKTRRHLIEFWMIEPEMAFYEFEDNLRLQEEYVSYLVQSVLSRCQLELGRLGRDVTKLELVKPPFPRLTYDEAIKLLHDKGFTDIEWGDDFGAPHETAIAESFDKPVFITHYPTSLKPFYMQPDPNRPDVVLCADLIAPEGYGEIIGGSERIHDYELLKQRLEEHHLPLEAYEWYLDLRKYGSVPHSGFGLGLERTVAWICGVEHVRETIPFPRLLNRLYP</sequence>
<gene>
    <name evidence="1" type="primary">asnS</name>
    <name type="ordered locus">GTNG_2106</name>
</gene>
<comment type="catalytic activity">
    <reaction evidence="1">
        <text>tRNA(Asn) + L-asparagine + ATP = L-asparaginyl-tRNA(Asn) + AMP + diphosphate + H(+)</text>
        <dbReference type="Rhea" id="RHEA:11180"/>
        <dbReference type="Rhea" id="RHEA-COMP:9659"/>
        <dbReference type="Rhea" id="RHEA-COMP:9674"/>
        <dbReference type="ChEBI" id="CHEBI:15378"/>
        <dbReference type="ChEBI" id="CHEBI:30616"/>
        <dbReference type="ChEBI" id="CHEBI:33019"/>
        <dbReference type="ChEBI" id="CHEBI:58048"/>
        <dbReference type="ChEBI" id="CHEBI:78442"/>
        <dbReference type="ChEBI" id="CHEBI:78515"/>
        <dbReference type="ChEBI" id="CHEBI:456215"/>
        <dbReference type="EC" id="6.1.1.22"/>
    </reaction>
</comment>
<comment type="subunit">
    <text evidence="1">Homodimer.</text>
</comment>
<comment type="subcellular location">
    <subcellularLocation>
        <location evidence="1">Cytoplasm</location>
    </subcellularLocation>
</comment>
<comment type="similarity">
    <text evidence="1">Belongs to the class-II aminoacyl-tRNA synthetase family.</text>
</comment>
<name>SYN_GEOTN</name>
<feature type="chain" id="PRO_1000051395" description="Asparagine--tRNA ligase">
    <location>
        <begin position="1"/>
        <end position="430"/>
    </location>
</feature>
<dbReference type="EC" id="6.1.1.22" evidence="1"/>
<dbReference type="EMBL" id="CP000557">
    <property type="protein sequence ID" value="ABO67458.1"/>
    <property type="molecule type" value="Genomic_DNA"/>
</dbReference>
<dbReference type="RefSeq" id="WP_008879580.1">
    <property type="nucleotide sequence ID" value="NC_009328.1"/>
</dbReference>
<dbReference type="SMR" id="A4IQ54"/>
<dbReference type="GeneID" id="87623794"/>
<dbReference type="KEGG" id="gtn:GTNG_2106"/>
<dbReference type="eggNOG" id="COG0017">
    <property type="taxonomic scope" value="Bacteria"/>
</dbReference>
<dbReference type="HOGENOM" id="CLU_004553_2_0_9"/>
<dbReference type="Proteomes" id="UP000001578">
    <property type="component" value="Chromosome"/>
</dbReference>
<dbReference type="GO" id="GO:0005737">
    <property type="term" value="C:cytoplasm"/>
    <property type="evidence" value="ECO:0007669"/>
    <property type="project" value="UniProtKB-SubCell"/>
</dbReference>
<dbReference type="GO" id="GO:0004816">
    <property type="term" value="F:asparagine-tRNA ligase activity"/>
    <property type="evidence" value="ECO:0007669"/>
    <property type="project" value="UniProtKB-UniRule"/>
</dbReference>
<dbReference type="GO" id="GO:0005524">
    <property type="term" value="F:ATP binding"/>
    <property type="evidence" value="ECO:0007669"/>
    <property type="project" value="UniProtKB-UniRule"/>
</dbReference>
<dbReference type="GO" id="GO:0140096">
    <property type="term" value="F:catalytic activity, acting on a protein"/>
    <property type="evidence" value="ECO:0007669"/>
    <property type="project" value="UniProtKB-ARBA"/>
</dbReference>
<dbReference type="GO" id="GO:0003676">
    <property type="term" value="F:nucleic acid binding"/>
    <property type="evidence" value="ECO:0007669"/>
    <property type="project" value="InterPro"/>
</dbReference>
<dbReference type="GO" id="GO:0016740">
    <property type="term" value="F:transferase activity"/>
    <property type="evidence" value="ECO:0007669"/>
    <property type="project" value="UniProtKB-ARBA"/>
</dbReference>
<dbReference type="GO" id="GO:0006421">
    <property type="term" value="P:asparaginyl-tRNA aminoacylation"/>
    <property type="evidence" value="ECO:0007669"/>
    <property type="project" value="UniProtKB-UniRule"/>
</dbReference>
<dbReference type="CDD" id="cd04323">
    <property type="entry name" value="AsnRS_cyto_like_N"/>
    <property type="match status" value="1"/>
</dbReference>
<dbReference type="CDD" id="cd00776">
    <property type="entry name" value="AsxRS_core"/>
    <property type="match status" value="1"/>
</dbReference>
<dbReference type="Gene3D" id="3.30.930.10">
    <property type="entry name" value="Bira Bifunctional Protein, Domain 2"/>
    <property type="match status" value="1"/>
</dbReference>
<dbReference type="Gene3D" id="2.40.50.140">
    <property type="entry name" value="Nucleic acid-binding proteins"/>
    <property type="match status" value="1"/>
</dbReference>
<dbReference type="HAMAP" id="MF_00534">
    <property type="entry name" value="Asn_tRNA_synth"/>
    <property type="match status" value="1"/>
</dbReference>
<dbReference type="InterPro" id="IPR004364">
    <property type="entry name" value="Aa-tRNA-synt_II"/>
</dbReference>
<dbReference type="InterPro" id="IPR006195">
    <property type="entry name" value="aa-tRNA-synth_II"/>
</dbReference>
<dbReference type="InterPro" id="IPR045864">
    <property type="entry name" value="aa-tRNA-synth_II/BPL/LPL"/>
</dbReference>
<dbReference type="InterPro" id="IPR004522">
    <property type="entry name" value="Asn-tRNA-ligase"/>
</dbReference>
<dbReference type="InterPro" id="IPR002312">
    <property type="entry name" value="Asp/Asn-tRNA-synth_IIb"/>
</dbReference>
<dbReference type="InterPro" id="IPR012340">
    <property type="entry name" value="NA-bd_OB-fold"/>
</dbReference>
<dbReference type="InterPro" id="IPR004365">
    <property type="entry name" value="NA-bd_OB_tRNA"/>
</dbReference>
<dbReference type="NCBIfam" id="TIGR00457">
    <property type="entry name" value="asnS"/>
    <property type="match status" value="1"/>
</dbReference>
<dbReference type="NCBIfam" id="NF003037">
    <property type="entry name" value="PRK03932.1"/>
    <property type="match status" value="1"/>
</dbReference>
<dbReference type="NCBIfam" id="NF003483">
    <property type="entry name" value="PRK05159.1"/>
    <property type="match status" value="1"/>
</dbReference>
<dbReference type="PANTHER" id="PTHR22594:SF34">
    <property type="entry name" value="ASPARAGINE--TRNA LIGASE, MITOCHONDRIAL-RELATED"/>
    <property type="match status" value="1"/>
</dbReference>
<dbReference type="PANTHER" id="PTHR22594">
    <property type="entry name" value="ASPARTYL/LYSYL-TRNA SYNTHETASE"/>
    <property type="match status" value="1"/>
</dbReference>
<dbReference type="Pfam" id="PF00152">
    <property type="entry name" value="tRNA-synt_2"/>
    <property type="match status" value="1"/>
</dbReference>
<dbReference type="Pfam" id="PF01336">
    <property type="entry name" value="tRNA_anti-codon"/>
    <property type="match status" value="1"/>
</dbReference>
<dbReference type="PRINTS" id="PR01042">
    <property type="entry name" value="TRNASYNTHASP"/>
</dbReference>
<dbReference type="SUPFAM" id="SSF55681">
    <property type="entry name" value="Class II aaRS and biotin synthetases"/>
    <property type="match status" value="1"/>
</dbReference>
<dbReference type="SUPFAM" id="SSF50249">
    <property type="entry name" value="Nucleic acid-binding proteins"/>
    <property type="match status" value="1"/>
</dbReference>
<dbReference type="PROSITE" id="PS50862">
    <property type="entry name" value="AA_TRNA_LIGASE_II"/>
    <property type="match status" value="1"/>
</dbReference>
<accession>A4IQ54</accession>
<evidence type="ECO:0000255" key="1">
    <source>
        <dbReference type="HAMAP-Rule" id="MF_00534"/>
    </source>
</evidence>
<keyword id="KW-0030">Aminoacyl-tRNA synthetase</keyword>
<keyword id="KW-0067">ATP-binding</keyword>
<keyword id="KW-0963">Cytoplasm</keyword>
<keyword id="KW-0436">Ligase</keyword>
<keyword id="KW-0547">Nucleotide-binding</keyword>
<keyword id="KW-0648">Protein biosynthesis</keyword>
<protein>
    <recommendedName>
        <fullName evidence="1">Asparagine--tRNA ligase</fullName>
        <ecNumber evidence="1">6.1.1.22</ecNumber>
    </recommendedName>
    <alternativeName>
        <fullName evidence="1">Asparaginyl-tRNA synthetase</fullName>
        <shortName evidence="1">AsnRS</shortName>
    </alternativeName>
</protein>
<proteinExistence type="inferred from homology"/>
<reference key="1">
    <citation type="journal article" date="2007" name="Proc. Natl. Acad. Sci. U.S.A.">
        <title>Genome and proteome of long-chain alkane degrading Geobacillus thermodenitrificans NG80-2 isolated from a deep-subsurface oil reservoir.</title>
        <authorList>
            <person name="Feng L."/>
            <person name="Wang W."/>
            <person name="Cheng J."/>
            <person name="Ren Y."/>
            <person name="Zhao G."/>
            <person name="Gao C."/>
            <person name="Tang Y."/>
            <person name="Liu X."/>
            <person name="Han W."/>
            <person name="Peng X."/>
            <person name="Liu R."/>
            <person name="Wang L."/>
        </authorList>
    </citation>
    <scope>NUCLEOTIDE SEQUENCE [LARGE SCALE GENOMIC DNA]</scope>
    <source>
        <strain>NG80-2</strain>
    </source>
</reference>
<organism>
    <name type="scientific">Geobacillus thermodenitrificans (strain NG80-2)</name>
    <dbReference type="NCBI Taxonomy" id="420246"/>
    <lineage>
        <taxon>Bacteria</taxon>
        <taxon>Bacillati</taxon>
        <taxon>Bacillota</taxon>
        <taxon>Bacilli</taxon>
        <taxon>Bacillales</taxon>
        <taxon>Anoxybacillaceae</taxon>
        <taxon>Geobacillus</taxon>
    </lineage>
</organism>